<name>Y1355_NEIM0</name>
<reference key="1">
    <citation type="journal article" date="2008" name="Genomics">
        <title>Characterization of ST-4821 complex, a unique Neisseria meningitidis clone.</title>
        <authorList>
            <person name="Peng J."/>
            <person name="Yang L."/>
            <person name="Yang F."/>
            <person name="Yang J."/>
            <person name="Yan Y."/>
            <person name="Nie H."/>
            <person name="Zhang X."/>
            <person name="Xiong Z."/>
            <person name="Jiang Y."/>
            <person name="Cheng F."/>
            <person name="Xu X."/>
            <person name="Chen S."/>
            <person name="Sun L."/>
            <person name="Li W."/>
            <person name="Shen Y."/>
            <person name="Shao Z."/>
            <person name="Liang X."/>
            <person name="Xu J."/>
            <person name="Jin Q."/>
        </authorList>
    </citation>
    <scope>NUCLEOTIDE SEQUENCE [LARGE SCALE GENOMIC DNA]</scope>
    <source>
        <strain>053442</strain>
    </source>
</reference>
<dbReference type="EMBL" id="CP000381">
    <property type="protein sequence ID" value="ABX73526.1"/>
    <property type="molecule type" value="Genomic_DNA"/>
</dbReference>
<dbReference type="RefSeq" id="WP_012221811.1">
    <property type="nucleotide sequence ID" value="NC_010120.1"/>
</dbReference>
<dbReference type="SMR" id="A9M0G3"/>
<dbReference type="KEGG" id="nmn:NMCC_1355"/>
<dbReference type="HOGENOM" id="CLU_140930_0_0_4"/>
<dbReference type="Proteomes" id="UP000001177">
    <property type="component" value="Chromosome"/>
</dbReference>
<dbReference type="GO" id="GO:0043590">
    <property type="term" value="C:bacterial nucleoid"/>
    <property type="evidence" value="ECO:0007669"/>
    <property type="project" value="UniProtKB-UniRule"/>
</dbReference>
<dbReference type="GO" id="GO:0005829">
    <property type="term" value="C:cytosol"/>
    <property type="evidence" value="ECO:0007669"/>
    <property type="project" value="TreeGrafter"/>
</dbReference>
<dbReference type="GO" id="GO:0003677">
    <property type="term" value="F:DNA binding"/>
    <property type="evidence" value="ECO:0007669"/>
    <property type="project" value="UniProtKB-UniRule"/>
</dbReference>
<dbReference type="Gene3D" id="3.30.1310.10">
    <property type="entry name" value="Nucleoid-associated protein YbaB-like domain"/>
    <property type="match status" value="1"/>
</dbReference>
<dbReference type="HAMAP" id="MF_00274">
    <property type="entry name" value="DNA_YbaB_EbfC"/>
    <property type="match status" value="1"/>
</dbReference>
<dbReference type="InterPro" id="IPR036894">
    <property type="entry name" value="YbaB-like_sf"/>
</dbReference>
<dbReference type="InterPro" id="IPR004401">
    <property type="entry name" value="YbaB/EbfC"/>
</dbReference>
<dbReference type="NCBIfam" id="TIGR00103">
    <property type="entry name" value="DNA_YbaB_EbfC"/>
    <property type="match status" value="1"/>
</dbReference>
<dbReference type="PANTHER" id="PTHR33449">
    <property type="entry name" value="NUCLEOID-ASSOCIATED PROTEIN YBAB"/>
    <property type="match status" value="1"/>
</dbReference>
<dbReference type="PANTHER" id="PTHR33449:SF1">
    <property type="entry name" value="NUCLEOID-ASSOCIATED PROTEIN YBAB"/>
    <property type="match status" value="1"/>
</dbReference>
<dbReference type="Pfam" id="PF02575">
    <property type="entry name" value="YbaB_DNA_bd"/>
    <property type="match status" value="1"/>
</dbReference>
<dbReference type="PIRSF" id="PIRSF004555">
    <property type="entry name" value="UCP004555"/>
    <property type="match status" value="1"/>
</dbReference>
<dbReference type="SUPFAM" id="SSF82607">
    <property type="entry name" value="YbaB-like"/>
    <property type="match status" value="1"/>
</dbReference>
<evidence type="ECO:0000255" key="1">
    <source>
        <dbReference type="HAMAP-Rule" id="MF_00274"/>
    </source>
</evidence>
<comment type="function">
    <text evidence="1">Binds to DNA and alters its conformation. May be involved in regulation of gene expression, nucleoid organization and DNA protection.</text>
</comment>
<comment type="subunit">
    <text evidence="1">Homodimer.</text>
</comment>
<comment type="subcellular location">
    <subcellularLocation>
        <location evidence="1">Cytoplasm</location>
        <location evidence="1">Nucleoid</location>
    </subcellularLocation>
</comment>
<comment type="similarity">
    <text evidence="1">Belongs to the YbaB/EbfC family.</text>
</comment>
<proteinExistence type="inferred from homology"/>
<organism>
    <name type="scientific">Neisseria meningitidis serogroup C (strain 053442)</name>
    <dbReference type="NCBI Taxonomy" id="374833"/>
    <lineage>
        <taxon>Bacteria</taxon>
        <taxon>Pseudomonadati</taxon>
        <taxon>Pseudomonadota</taxon>
        <taxon>Betaproteobacteria</taxon>
        <taxon>Neisseriales</taxon>
        <taxon>Neisseriaceae</taxon>
        <taxon>Neisseria</taxon>
    </lineage>
</organism>
<protein>
    <recommendedName>
        <fullName evidence="1">Nucleoid-associated protein NMCC_1355</fullName>
    </recommendedName>
</protein>
<accession>A9M0G3</accession>
<keyword id="KW-0963">Cytoplasm</keyword>
<keyword id="KW-0238">DNA-binding</keyword>
<feature type="chain" id="PRO_1000078763" description="Nucleoid-associated protein NMCC_1355">
    <location>
        <begin position="1"/>
        <end position="111"/>
    </location>
</feature>
<gene>
    <name type="ordered locus">NMCC_1355</name>
</gene>
<sequence>MFGKAGLGGLMKQAQQMQENMKKAQAKLAETEIEGEAGNGLVKITMTCAHEVRKIDISPDLIQEAADDKEMLEDLILAALKSARDKAEETANKTMGAFAQGLPPGVGDFFR</sequence>